<comment type="function">
    <text evidence="2">Transports chloride and fluoride with similar efficiency.</text>
</comment>
<comment type="subcellular location">
    <subcellularLocation>
        <location evidence="3">Cell membrane</location>
        <topology evidence="3">Multi-pass membrane protein</topology>
    </subcellularLocation>
</comment>
<comment type="induction">
    <text evidence="2">By fluoride, via a fluoride-responsive riboswitch.</text>
</comment>
<comment type="similarity">
    <text evidence="3">Belongs to the chloride channel (TC 2.A.49) family.</text>
</comment>
<sequence length="452" mass="48306">MAGQMSKFRRPEQLDLLPYIAKWLALAGLVALLAGSASALFLLSLDHATQWRETHPWVIWLLPVAGFAVGLAYHLIGKPVDAGNNLIIDEIHDPKKIVPLRMVPMVLIGTVVSHLFGASVGREGTAVQMGGALADQLTHVFRLRREDRRVILMAGISAGFASVFGTPLAGALFGLEVLAIGRMRYDALFPCVVAAIVADQVGQAWGVVHTHYVIGEVVPVQLWSVMAVVAAGIVFGLTGLLFATATHKLGAFVKRLITYSPLRPFAGGLLIAVAVWALGSNHYIDVDKYIGLGIPSIVQSFQMPMAPWDWLGKMVFTVVSLGTGFKGGEVTPLFYIGATLGNALAPLLHLPFGMLAGIGFVAVFAGAANTPLATIVMAMELFGPEIAPLAAIACIASYLVSGHTGIYHAQRVGHSKHHRPLPEEIRLSDIKQFHAQSESASERKVTLAGEEK</sequence>
<organism>
    <name type="scientific">Pseudomonas syringae pv. tomato (strain ATCC BAA-871 / DC3000)</name>
    <dbReference type="NCBI Taxonomy" id="223283"/>
    <lineage>
        <taxon>Bacteria</taxon>
        <taxon>Pseudomonadati</taxon>
        <taxon>Pseudomonadota</taxon>
        <taxon>Gammaproteobacteria</taxon>
        <taxon>Pseudomonadales</taxon>
        <taxon>Pseudomonadaceae</taxon>
        <taxon>Pseudomonas</taxon>
    </lineage>
</organism>
<dbReference type="EMBL" id="AE016853">
    <property type="protein sequence ID" value="AAO58065.1"/>
    <property type="molecule type" value="Genomic_DNA"/>
</dbReference>
<dbReference type="RefSeq" id="NP_794370.1">
    <property type="nucleotide sequence ID" value="NC_004578.1"/>
</dbReference>
<dbReference type="SMR" id="Q87WD2"/>
<dbReference type="STRING" id="223283.PSPTO_4619"/>
<dbReference type="TCDB" id="2.A.49.9.5">
    <property type="family name" value="the chloride carrier/channel (clc) family"/>
</dbReference>
<dbReference type="KEGG" id="pst:PSPTO_4619"/>
<dbReference type="PATRIC" id="fig|223283.9.peg.4732"/>
<dbReference type="eggNOG" id="COG0038">
    <property type="taxonomic scope" value="Bacteria"/>
</dbReference>
<dbReference type="HOGENOM" id="CLU_015263_1_1_6"/>
<dbReference type="OrthoDB" id="9767361at2"/>
<dbReference type="PhylomeDB" id="Q87WD2"/>
<dbReference type="Proteomes" id="UP000002515">
    <property type="component" value="Chromosome"/>
</dbReference>
<dbReference type="GO" id="GO:0034707">
    <property type="term" value="C:chloride channel complex"/>
    <property type="evidence" value="ECO:0007669"/>
    <property type="project" value="UniProtKB-KW"/>
</dbReference>
<dbReference type="GO" id="GO:0005886">
    <property type="term" value="C:plasma membrane"/>
    <property type="evidence" value="ECO:0007669"/>
    <property type="project" value="UniProtKB-SubCell"/>
</dbReference>
<dbReference type="GO" id="GO:0005254">
    <property type="term" value="F:chloride channel activity"/>
    <property type="evidence" value="ECO:0007669"/>
    <property type="project" value="UniProtKB-KW"/>
</dbReference>
<dbReference type="CDD" id="cd03682">
    <property type="entry name" value="ClC_sycA_like"/>
    <property type="match status" value="1"/>
</dbReference>
<dbReference type="Gene3D" id="1.10.3080.10">
    <property type="entry name" value="Clc chloride channel"/>
    <property type="match status" value="1"/>
</dbReference>
<dbReference type="InterPro" id="IPR014743">
    <property type="entry name" value="Cl-channel_core"/>
</dbReference>
<dbReference type="InterPro" id="IPR001807">
    <property type="entry name" value="ClC"/>
</dbReference>
<dbReference type="InterPro" id="IPR050368">
    <property type="entry name" value="ClC-type_chloride_channel"/>
</dbReference>
<dbReference type="PANTHER" id="PTHR43427">
    <property type="entry name" value="CHLORIDE CHANNEL PROTEIN CLC-E"/>
    <property type="match status" value="1"/>
</dbReference>
<dbReference type="PANTHER" id="PTHR43427:SF12">
    <property type="entry name" value="CHLORIDE TRANSPORTER"/>
    <property type="match status" value="1"/>
</dbReference>
<dbReference type="Pfam" id="PF00654">
    <property type="entry name" value="Voltage_CLC"/>
    <property type="match status" value="1"/>
</dbReference>
<dbReference type="PRINTS" id="PR00762">
    <property type="entry name" value="CLCHANNEL"/>
</dbReference>
<dbReference type="SUPFAM" id="SSF81340">
    <property type="entry name" value="Clc chloride channel"/>
    <property type="match status" value="1"/>
</dbReference>
<gene>
    <name type="primary">eriC</name>
    <name type="ordered locus">PSPTO_4619</name>
</gene>
<protein>
    <recommendedName>
        <fullName>Chloride/fluoride channel protein</fullName>
    </recommendedName>
</protein>
<keyword id="KW-1003">Cell membrane</keyword>
<keyword id="KW-0868">Chloride</keyword>
<keyword id="KW-0869">Chloride channel</keyword>
<keyword id="KW-0407">Ion channel</keyword>
<keyword id="KW-0406">Ion transport</keyword>
<keyword id="KW-0472">Membrane</keyword>
<keyword id="KW-1185">Reference proteome</keyword>
<keyword id="KW-0812">Transmembrane</keyword>
<keyword id="KW-1133">Transmembrane helix</keyword>
<keyword id="KW-0813">Transport</keyword>
<name>ERIC_PSESM</name>
<proteinExistence type="evidence at protein level"/>
<evidence type="ECO:0000255" key="1"/>
<evidence type="ECO:0000269" key="2">
    <source>
    </source>
</evidence>
<evidence type="ECO:0000305" key="3"/>
<accession>Q87WD2</accession>
<feature type="chain" id="PRO_0000428836" description="Chloride/fluoride channel protein">
    <location>
        <begin position="1"/>
        <end position="452"/>
    </location>
</feature>
<feature type="transmembrane region" description="Helical" evidence="1">
    <location>
        <begin position="23"/>
        <end position="43"/>
    </location>
</feature>
<feature type="transmembrane region" description="Helical" evidence="1">
    <location>
        <begin position="57"/>
        <end position="77"/>
    </location>
</feature>
<feature type="transmembrane region" description="Helical" evidence="1">
    <location>
        <begin position="97"/>
        <end position="117"/>
    </location>
</feature>
<feature type="transmembrane region" description="Helical" evidence="1">
    <location>
        <begin position="160"/>
        <end position="180"/>
    </location>
</feature>
<feature type="transmembrane region" description="Helical" evidence="1">
    <location>
        <begin position="188"/>
        <end position="208"/>
    </location>
</feature>
<feature type="transmembrane region" description="Helical" evidence="1">
    <location>
        <begin position="222"/>
        <end position="242"/>
    </location>
</feature>
<feature type="transmembrane region" description="Helical" evidence="1">
    <location>
        <begin position="264"/>
        <end position="284"/>
    </location>
</feature>
<feature type="transmembrane region" description="Helical" evidence="1">
    <location>
        <begin position="315"/>
        <end position="337"/>
    </location>
</feature>
<feature type="transmembrane region" description="Helical" evidence="1">
    <location>
        <begin position="344"/>
        <end position="364"/>
    </location>
</feature>
<feature type="transmembrane region" description="Helical" evidence="1">
    <location>
        <begin position="386"/>
        <end position="408"/>
    </location>
</feature>
<reference key="1">
    <citation type="journal article" date="2003" name="Proc. Natl. Acad. Sci. U.S.A.">
        <title>The complete genome sequence of the Arabidopsis and tomato pathogen Pseudomonas syringae pv. tomato DC3000.</title>
        <authorList>
            <person name="Buell C.R."/>
            <person name="Joardar V."/>
            <person name="Lindeberg M."/>
            <person name="Selengut J."/>
            <person name="Paulsen I.T."/>
            <person name="Gwinn M.L."/>
            <person name="Dodson R.J."/>
            <person name="DeBoy R.T."/>
            <person name="Durkin A.S."/>
            <person name="Kolonay J.F."/>
            <person name="Madupu R."/>
            <person name="Daugherty S.C."/>
            <person name="Brinkac L.M."/>
            <person name="Beanan M.J."/>
            <person name="Haft D.H."/>
            <person name="Nelson W.C."/>
            <person name="Davidsen T.M."/>
            <person name="Zafar N."/>
            <person name="Zhou L."/>
            <person name="Liu J."/>
            <person name="Yuan Q."/>
            <person name="Khouri H.M."/>
            <person name="Fedorova N.B."/>
            <person name="Tran B."/>
            <person name="Russell D."/>
            <person name="Berry K.J."/>
            <person name="Utterback T.R."/>
            <person name="Van Aken S.E."/>
            <person name="Feldblyum T.V."/>
            <person name="D'Ascenzo M."/>
            <person name="Deng W.-L."/>
            <person name="Ramos A.R."/>
            <person name="Alfano J.R."/>
            <person name="Cartinhour S."/>
            <person name="Chatterjee A.K."/>
            <person name="Delaney T.P."/>
            <person name="Lazarowitz S.G."/>
            <person name="Martin G.B."/>
            <person name="Schneider D.J."/>
            <person name="Tang X."/>
            <person name="Bender C.L."/>
            <person name="White O."/>
            <person name="Fraser C.M."/>
            <person name="Collmer A."/>
        </authorList>
    </citation>
    <scope>NUCLEOTIDE SEQUENCE [LARGE SCALE GENOMIC DNA]</scope>
    <source>
        <strain>ATCC BAA-871 / DC3000</strain>
    </source>
</reference>
<reference key="2">
    <citation type="journal article" date="2012" name="Science">
        <title>Widespread genetic switches and toxicity resistance proteins for fluoride.</title>
        <authorList>
            <person name="Baker J.L."/>
            <person name="Sudarsan N."/>
            <person name="Weinberg Z."/>
            <person name="Roth A."/>
            <person name="Stockbridge R.B."/>
            <person name="Breaker R.R."/>
        </authorList>
    </citation>
    <scope>FUNCTION IN TRANSPORT</scope>
    <scope>INDUCTION</scope>
    <scope>GENE NAME</scope>
    <source>
        <strain>ATCC BAA-871 / DC3000</strain>
    </source>
</reference>